<reference key="1">
    <citation type="submission" date="2008-05" db="EMBL/GenBank/DDBJ databases">
        <title>Complete sequence of chromosome 1 of Ralstonia pickettii 12J.</title>
        <authorList>
            <person name="Lucas S."/>
            <person name="Copeland A."/>
            <person name="Lapidus A."/>
            <person name="Glavina del Rio T."/>
            <person name="Dalin E."/>
            <person name="Tice H."/>
            <person name="Bruce D."/>
            <person name="Goodwin L."/>
            <person name="Pitluck S."/>
            <person name="Meincke L."/>
            <person name="Brettin T."/>
            <person name="Detter J.C."/>
            <person name="Han C."/>
            <person name="Kuske C.R."/>
            <person name="Schmutz J."/>
            <person name="Larimer F."/>
            <person name="Land M."/>
            <person name="Hauser L."/>
            <person name="Kyrpides N."/>
            <person name="Mikhailova N."/>
            <person name="Marsh T."/>
            <person name="Richardson P."/>
        </authorList>
    </citation>
    <scope>NUCLEOTIDE SEQUENCE [LARGE SCALE GENOMIC DNA]</scope>
    <source>
        <strain>12J</strain>
    </source>
</reference>
<organism>
    <name type="scientific">Ralstonia pickettii (strain 12J)</name>
    <dbReference type="NCBI Taxonomy" id="402626"/>
    <lineage>
        <taxon>Bacteria</taxon>
        <taxon>Pseudomonadati</taxon>
        <taxon>Pseudomonadota</taxon>
        <taxon>Betaproteobacteria</taxon>
        <taxon>Burkholderiales</taxon>
        <taxon>Burkholderiaceae</taxon>
        <taxon>Ralstonia</taxon>
    </lineage>
</organism>
<feature type="chain" id="PRO_1000201128" description="Phosphoglucosamine mutase">
    <location>
        <begin position="1"/>
        <end position="447"/>
    </location>
</feature>
<feature type="active site" description="Phosphoserine intermediate" evidence="1">
    <location>
        <position position="107"/>
    </location>
</feature>
<feature type="binding site" description="via phosphate group" evidence="1">
    <location>
        <position position="107"/>
    </location>
    <ligand>
        <name>Mg(2+)</name>
        <dbReference type="ChEBI" id="CHEBI:18420"/>
    </ligand>
</feature>
<feature type="binding site" evidence="1">
    <location>
        <position position="246"/>
    </location>
    <ligand>
        <name>Mg(2+)</name>
        <dbReference type="ChEBI" id="CHEBI:18420"/>
    </ligand>
</feature>
<feature type="binding site" evidence="1">
    <location>
        <position position="248"/>
    </location>
    <ligand>
        <name>Mg(2+)</name>
        <dbReference type="ChEBI" id="CHEBI:18420"/>
    </ligand>
</feature>
<feature type="binding site" evidence="1">
    <location>
        <position position="250"/>
    </location>
    <ligand>
        <name>Mg(2+)</name>
        <dbReference type="ChEBI" id="CHEBI:18420"/>
    </ligand>
</feature>
<feature type="modified residue" description="Phosphoserine" evidence="1">
    <location>
        <position position="107"/>
    </location>
</feature>
<proteinExistence type="inferred from homology"/>
<sequence length="447" mass="47787">MSRKYFGTDGIRGRVGESPITPDFVLRLGYAAGRVLAHGGEAHGHGRPTVLIGKDTRLSGYMLEAALEAGFTAAGVDVLMSGPLPTPGVAYLTRALRLSAGVVISASHNPYYDNGIKFFSATGDKLPDETELQIEAELEKPMAYAASDALGRARRIEDAAGRYIEFCKSTFPSDLNLFGMKVVLDSAHGAAYHIAPHVFHELGADVVSIGNQPNGRNINDGYGATAPGKLVEATREHGADIGLAFDGDADRLQVVDRNGRLYNGDELLYVMVQARRAAGQTVPGAVGTLMTNLAVELALKAQGVEFVRAKVGDRYVLEELKKNGWLLGGEGSGHLLCLDKHSTGDGIISALQVLAALRRSGQTLDEMLDGVRLFPQKLINVRVEKGFDWKSHAGLQAALKTSEAELDGKGRVLIRPSGTEPVVRVMVEAQDAELANQHAERLAATLQ</sequence>
<dbReference type="EC" id="5.4.2.10" evidence="1"/>
<dbReference type="EMBL" id="CP001068">
    <property type="protein sequence ID" value="ACD27161.1"/>
    <property type="molecule type" value="Genomic_DNA"/>
</dbReference>
<dbReference type="SMR" id="B2UGP7"/>
<dbReference type="STRING" id="402626.Rpic_2027"/>
<dbReference type="KEGG" id="rpi:Rpic_2027"/>
<dbReference type="eggNOG" id="COG1109">
    <property type="taxonomic scope" value="Bacteria"/>
</dbReference>
<dbReference type="HOGENOM" id="CLU_016950_7_0_4"/>
<dbReference type="GO" id="GO:0005829">
    <property type="term" value="C:cytosol"/>
    <property type="evidence" value="ECO:0007669"/>
    <property type="project" value="TreeGrafter"/>
</dbReference>
<dbReference type="GO" id="GO:0000287">
    <property type="term" value="F:magnesium ion binding"/>
    <property type="evidence" value="ECO:0007669"/>
    <property type="project" value="UniProtKB-UniRule"/>
</dbReference>
<dbReference type="GO" id="GO:0008966">
    <property type="term" value="F:phosphoglucosamine mutase activity"/>
    <property type="evidence" value="ECO:0007669"/>
    <property type="project" value="UniProtKB-UniRule"/>
</dbReference>
<dbReference type="GO" id="GO:0004615">
    <property type="term" value="F:phosphomannomutase activity"/>
    <property type="evidence" value="ECO:0007669"/>
    <property type="project" value="TreeGrafter"/>
</dbReference>
<dbReference type="GO" id="GO:0005975">
    <property type="term" value="P:carbohydrate metabolic process"/>
    <property type="evidence" value="ECO:0007669"/>
    <property type="project" value="InterPro"/>
</dbReference>
<dbReference type="GO" id="GO:0009252">
    <property type="term" value="P:peptidoglycan biosynthetic process"/>
    <property type="evidence" value="ECO:0007669"/>
    <property type="project" value="TreeGrafter"/>
</dbReference>
<dbReference type="GO" id="GO:0006048">
    <property type="term" value="P:UDP-N-acetylglucosamine biosynthetic process"/>
    <property type="evidence" value="ECO:0007669"/>
    <property type="project" value="TreeGrafter"/>
</dbReference>
<dbReference type="CDD" id="cd05802">
    <property type="entry name" value="GlmM"/>
    <property type="match status" value="1"/>
</dbReference>
<dbReference type="FunFam" id="3.30.310.50:FF:000001">
    <property type="entry name" value="Phosphoglucosamine mutase"/>
    <property type="match status" value="1"/>
</dbReference>
<dbReference type="FunFam" id="3.40.120.10:FF:000001">
    <property type="entry name" value="Phosphoglucosamine mutase"/>
    <property type="match status" value="1"/>
</dbReference>
<dbReference type="FunFam" id="3.40.120.10:FF:000003">
    <property type="entry name" value="Phosphoglucosamine mutase"/>
    <property type="match status" value="1"/>
</dbReference>
<dbReference type="Gene3D" id="3.40.120.10">
    <property type="entry name" value="Alpha-D-Glucose-1,6-Bisphosphate, subunit A, domain 3"/>
    <property type="match status" value="3"/>
</dbReference>
<dbReference type="Gene3D" id="3.30.310.50">
    <property type="entry name" value="Alpha-D-phosphohexomutase, C-terminal domain"/>
    <property type="match status" value="1"/>
</dbReference>
<dbReference type="HAMAP" id="MF_01554_B">
    <property type="entry name" value="GlmM_B"/>
    <property type="match status" value="1"/>
</dbReference>
<dbReference type="InterPro" id="IPR005844">
    <property type="entry name" value="A-D-PHexomutase_a/b/a-I"/>
</dbReference>
<dbReference type="InterPro" id="IPR016055">
    <property type="entry name" value="A-D-PHexomutase_a/b/a-I/II/III"/>
</dbReference>
<dbReference type="InterPro" id="IPR005845">
    <property type="entry name" value="A-D-PHexomutase_a/b/a-II"/>
</dbReference>
<dbReference type="InterPro" id="IPR005846">
    <property type="entry name" value="A-D-PHexomutase_a/b/a-III"/>
</dbReference>
<dbReference type="InterPro" id="IPR005843">
    <property type="entry name" value="A-D-PHexomutase_C"/>
</dbReference>
<dbReference type="InterPro" id="IPR036900">
    <property type="entry name" value="A-D-PHexomutase_C_sf"/>
</dbReference>
<dbReference type="InterPro" id="IPR016066">
    <property type="entry name" value="A-D-PHexomutase_CS"/>
</dbReference>
<dbReference type="InterPro" id="IPR005841">
    <property type="entry name" value="Alpha-D-phosphohexomutase_SF"/>
</dbReference>
<dbReference type="InterPro" id="IPR006352">
    <property type="entry name" value="GlmM_bact"/>
</dbReference>
<dbReference type="InterPro" id="IPR050060">
    <property type="entry name" value="Phosphoglucosamine_mutase"/>
</dbReference>
<dbReference type="NCBIfam" id="TIGR01455">
    <property type="entry name" value="glmM"/>
    <property type="match status" value="1"/>
</dbReference>
<dbReference type="NCBIfam" id="NF008139">
    <property type="entry name" value="PRK10887.1"/>
    <property type="match status" value="1"/>
</dbReference>
<dbReference type="PANTHER" id="PTHR42946:SF1">
    <property type="entry name" value="PHOSPHOGLUCOMUTASE (ALPHA-D-GLUCOSE-1,6-BISPHOSPHATE-DEPENDENT)"/>
    <property type="match status" value="1"/>
</dbReference>
<dbReference type="PANTHER" id="PTHR42946">
    <property type="entry name" value="PHOSPHOHEXOSE MUTASE"/>
    <property type="match status" value="1"/>
</dbReference>
<dbReference type="Pfam" id="PF02878">
    <property type="entry name" value="PGM_PMM_I"/>
    <property type="match status" value="1"/>
</dbReference>
<dbReference type="Pfam" id="PF02879">
    <property type="entry name" value="PGM_PMM_II"/>
    <property type="match status" value="1"/>
</dbReference>
<dbReference type="Pfam" id="PF02880">
    <property type="entry name" value="PGM_PMM_III"/>
    <property type="match status" value="1"/>
</dbReference>
<dbReference type="Pfam" id="PF00408">
    <property type="entry name" value="PGM_PMM_IV"/>
    <property type="match status" value="1"/>
</dbReference>
<dbReference type="PRINTS" id="PR00509">
    <property type="entry name" value="PGMPMM"/>
</dbReference>
<dbReference type="SUPFAM" id="SSF55957">
    <property type="entry name" value="Phosphoglucomutase, C-terminal domain"/>
    <property type="match status" value="1"/>
</dbReference>
<dbReference type="SUPFAM" id="SSF53738">
    <property type="entry name" value="Phosphoglucomutase, first 3 domains"/>
    <property type="match status" value="3"/>
</dbReference>
<dbReference type="PROSITE" id="PS00710">
    <property type="entry name" value="PGM_PMM"/>
    <property type="match status" value="1"/>
</dbReference>
<keyword id="KW-0413">Isomerase</keyword>
<keyword id="KW-0460">Magnesium</keyword>
<keyword id="KW-0479">Metal-binding</keyword>
<keyword id="KW-0597">Phosphoprotein</keyword>
<gene>
    <name evidence="1" type="primary">glmM</name>
    <name type="ordered locus">Rpic_2027</name>
</gene>
<comment type="function">
    <text evidence="1">Catalyzes the conversion of glucosamine-6-phosphate to glucosamine-1-phosphate.</text>
</comment>
<comment type="catalytic activity">
    <reaction evidence="1">
        <text>alpha-D-glucosamine 1-phosphate = D-glucosamine 6-phosphate</text>
        <dbReference type="Rhea" id="RHEA:23424"/>
        <dbReference type="ChEBI" id="CHEBI:58516"/>
        <dbReference type="ChEBI" id="CHEBI:58725"/>
        <dbReference type="EC" id="5.4.2.10"/>
    </reaction>
</comment>
<comment type="cofactor">
    <cofactor evidence="1">
        <name>Mg(2+)</name>
        <dbReference type="ChEBI" id="CHEBI:18420"/>
    </cofactor>
    <text evidence="1">Binds 1 Mg(2+) ion per subunit.</text>
</comment>
<comment type="PTM">
    <text evidence="1">Activated by phosphorylation.</text>
</comment>
<comment type="similarity">
    <text evidence="1">Belongs to the phosphohexose mutase family.</text>
</comment>
<evidence type="ECO:0000255" key="1">
    <source>
        <dbReference type="HAMAP-Rule" id="MF_01554"/>
    </source>
</evidence>
<accession>B2UGP7</accession>
<protein>
    <recommendedName>
        <fullName evidence="1">Phosphoglucosamine mutase</fullName>
        <ecNumber evidence="1">5.4.2.10</ecNumber>
    </recommendedName>
</protein>
<name>GLMM_RALPJ</name>